<sequence length="436" mass="48860">MVLPTVAIVGRPNVGKSTLFNRIAGERISIVEDVEGVTRDRIYATGEWLNRQFSLIDTGGIDDVDAPFMEQIKHQAQIAMEEADVIVFVVSGKEGVTDADEYVSKILYRTNTPVILAVNKVDNPEMRNDIYDFYSLGLGDPYPVSSVHGIGTGDVLDEIVENLPVEEAEENDDIIRFSLIGRPNVGKSSLINAILGEDRVIASPVAGTTRDAIDTHFTDADGQEFTMIDTAGMRKSGKIYENTEKYSVMRAMRAIDRSDVVLMVINAEEGIREYDKRIAGFAHEAGKGMIIVVNKWDTIDKDNHTVAKWEADIRDQFQFLTYAPIIFVSALTKQRLNKLPDLIKRISESQNKRIPSAVLNDVIMDAIAINPTPTDKGKRLKIFYATQVSVKPPTFVVFVNEEELMHFSYLRFLENQIRAAFTFEGTPIHLIARKRK</sequence>
<proteinExistence type="inferred from homology"/>
<reference key="1">
    <citation type="journal article" date="2005" name="J. Infect. Dis.">
        <title>Genome sequence of a serotype M28 strain of group A Streptococcus: potential new insights into puerperal sepsis and bacterial disease specificity.</title>
        <authorList>
            <person name="Green N.M."/>
            <person name="Zhang S."/>
            <person name="Porcella S.F."/>
            <person name="Nagiec M.J."/>
            <person name="Barbian K.D."/>
            <person name="Beres S.B."/>
            <person name="Lefebvre R.B."/>
            <person name="Musser J.M."/>
        </authorList>
    </citation>
    <scope>NUCLEOTIDE SEQUENCE [LARGE SCALE GENOMIC DNA]</scope>
    <source>
        <strain>MGAS6180</strain>
    </source>
</reference>
<keyword id="KW-0342">GTP-binding</keyword>
<keyword id="KW-0547">Nucleotide-binding</keyword>
<keyword id="KW-0677">Repeat</keyword>
<keyword id="KW-0690">Ribosome biogenesis</keyword>
<dbReference type="EMBL" id="CP000056">
    <property type="protein sequence ID" value="AAX71393.1"/>
    <property type="molecule type" value="Genomic_DNA"/>
</dbReference>
<dbReference type="RefSeq" id="WP_011284518.1">
    <property type="nucleotide sequence ID" value="NC_007296.2"/>
</dbReference>
<dbReference type="SMR" id="Q48V63"/>
<dbReference type="KEGG" id="spb:M28_Spy0279"/>
<dbReference type="HOGENOM" id="CLU_016077_6_2_9"/>
<dbReference type="GO" id="GO:0005525">
    <property type="term" value="F:GTP binding"/>
    <property type="evidence" value="ECO:0007669"/>
    <property type="project" value="UniProtKB-UniRule"/>
</dbReference>
<dbReference type="GO" id="GO:0043022">
    <property type="term" value="F:ribosome binding"/>
    <property type="evidence" value="ECO:0007669"/>
    <property type="project" value="TreeGrafter"/>
</dbReference>
<dbReference type="GO" id="GO:0042254">
    <property type="term" value="P:ribosome biogenesis"/>
    <property type="evidence" value="ECO:0007669"/>
    <property type="project" value="UniProtKB-KW"/>
</dbReference>
<dbReference type="CDD" id="cd01894">
    <property type="entry name" value="EngA1"/>
    <property type="match status" value="1"/>
</dbReference>
<dbReference type="CDD" id="cd01895">
    <property type="entry name" value="EngA2"/>
    <property type="match status" value="1"/>
</dbReference>
<dbReference type="FunFam" id="3.30.300.20:FF:000004">
    <property type="entry name" value="GTPase Der"/>
    <property type="match status" value="1"/>
</dbReference>
<dbReference type="FunFam" id="3.40.50.300:FF:000040">
    <property type="entry name" value="GTPase Der"/>
    <property type="match status" value="1"/>
</dbReference>
<dbReference type="FunFam" id="3.40.50.300:FF:000057">
    <property type="entry name" value="GTPase Der"/>
    <property type="match status" value="1"/>
</dbReference>
<dbReference type="Gene3D" id="3.30.300.20">
    <property type="match status" value="1"/>
</dbReference>
<dbReference type="Gene3D" id="3.40.50.300">
    <property type="entry name" value="P-loop containing nucleotide triphosphate hydrolases"/>
    <property type="match status" value="2"/>
</dbReference>
<dbReference type="HAMAP" id="MF_00195">
    <property type="entry name" value="GTPase_Der"/>
    <property type="match status" value="1"/>
</dbReference>
<dbReference type="InterPro" id="IPR031166">
    <property type="entry name" value="G_ENGA"/>
</dbReference>
<dbReference type="InterPro" id="IPR006073">
    <property type="entry name" value="GTP-bd"/>
</dbReference>
<dbReference type="InterPro" id="IPR016484">
    <property type="entry name" value="GTPase_Der"/>
</dbReference>
<dbReference type="InterPro" id="IPR032859">
    <property type="entry name" value="KH_dom-like"/>
</dbReference>
<dbReference type="InterPro" id="IPR015946">
    <property type="entry name" value="KH_dom-like_a/b"/>
</dbReference>
<dbReference type="InterPro" id="IPR027417">
    <property type="entry name" value="P-loop_NTPase"/>
</dbReference>
<dbReference type="InterPro" id="IPR005225">
    <property type="entry name" value="Small_GTP-bd"/>
</dbReference>
<dbReference type="NCBIfam" id="TIGR03594">
    <property type="entry name" value="GTPase_EngA"/>
    <property type="match status" value="1"/>
</dbReference>
<dbReference type="NCBIfam" id="TIGR00231">
    <property type="entry name" value="small_GTP"/>
    <property type="match status" value="2"/>
</dbReference>
<dbReference type="PANTHER" id="PTHR43834">
    <property type="entry name" value="GTPASE DER"/>
    <property type="match status" value="1"/>
</dbReference>
<dbReference type="PANTHER" id="PTHR43834:SF6">
    <property type="entry name" value="GTPASE DER"/>
    <property type="match status" value="1"/>
</dbReference>
<dbReference type="Pfam" id="PF14714">
    <property type="entry name" value="KH_dom-like"/>
    <property type="match status" value="1"/>
</dbReference>
<dbReference type="Pfam" id="PF01926">
    <property type="entry name" value="MMR_HSR1"/>
    <property type="match status" value="2"/>
</dbReference>
<dbReference type="PIRSF" id="PIRSF006485">
    <property type="entry name" value="GTP-binding_EngA"/>
    <property type="match status" value="1"/>
</dbReference>
<dbReference type="PRINTS" id="PR00326">
    <property type="entry name" value="GTP1OBG"/>
</dbReference>
<dbReference type="SUPFAM" id="SSF52540">
    <property type="entry name" value="P-loop containing nucleoside triphosphate hydrolases"/>
    <property type="match status" value="2"/>
</dbReference>
<dbReference type="PROSITE" id="PS51712">
    <property type="entry name" value="G_ENGA"/>
    <property type="match status" value="2"/>
</dbReference>
<protein>
    <recommendedName>
        <fullName evidence="1">GTPase Der</fullName>
    </recommendedName>
    <alternativeName>
        <fullName evidence="1">GTP-binding protein EngA</fullName>
    </alternativeName>
</protein>
<organism>
    <name type="scientific">Streptococcus pyogenes serotype M28 (strain MGAS6180)</name>
    <dbReference type="NCBI Taxonomy" id="319701"/>
    <lineage>
        <taxon>Bacteria</taxon>
        <taxon>Bacillati</taxon>
        <taxon>Bacillota</taxon>
        <taxon>Bacilli</taxon>
        <taxon>Lactobacillales</taxon>
        <taxon>Streptococcaceae</taxon>
        <taxon>Streptococcus</taxon>
    </lineage>
</organism>
<comment type="function">
    <text evidence="1">GTPase that plays an essential role in the late steps of ribosome biogenesis.</text>
</comment>
<comment type="subunit">
    <text evidence="1">Associates with the 50S ribosomal subunit.</text>
</comment>
<comment type="similarity">
    <text evidence="1">Belongs to the TRAFAC class TrmE-Era-EngA-EngB-Septin-like GTPase superfamily. EngA (Der) GTPase family.</text>
</comment>
<gene>
    <name evidence="1" type="primary">der</name>
    <name type="synonym">engA</name>
    <name type="ordered locus">M28_Spy0279</name>
</gene>
<evidence type="ECO:0000255" key="1">
    <source>
        <dbReference type="HAMAP-Rule" id="MF_00195"/>
    </source>
</evidence>
<feature type="chain" id="PRO_1000011758" description="GTPase Der">
    <location>
        <begin position="1"/>
        <end position="436"/>
    </location>
</feature>
<feature type="domain" description="EngA-type G 1">
    <location>
        <begin position="4"/>
        <end position="167"/>
    </location>
</feature>
<feature type="domain" description="EngA-type G 2">
    <location>
        <begin position="175"/>
        <end position="351"/>
    </location>
</feature>
<feature type="domain" description="KH-like" evidence="1">
    <location>
        <begin position="352"/>
        <end position="436"/>
    </location>
</feature>
<feature type="binding site" evidence="1">
    <location>
        <begin position="10"/>
        <end position="17"/>
    </location>
    <ligand>
        <name>GTP</name>
        <dbReference type="ChEBI" id="CHEBI:37565"/>
        <label>1</label>
    </ligand>
</feature>
<feature type="binding site" evidence="1">
    <location>
        <begin position="57"/>
        <end position="61"/>
    </location>
    <ligand>
        <name>GTP</name>
        <dbReference type="ChEBI" id="CHEBI:37565"/>
        <label>1</label>
    </ligand>
</feature>
<feature type="binding site" evidence="1">
    <location>
        <begin position="119"/>
        <end position="122"/>
    </location>
    <ligand>
        <name>GTP</name>
        <dbReference type="ChEBI" id="CHEBI:37565"/>
        <label>1</label>
    </ligand>
</feature>
<feature type="binding site" evidence="1">
    <location>
        <begin position="181"/>
        <end position="188"/>
    </location>
    <ligand>
        <name>GTP</name>
        <dbReference type="ChEBI" id="CHEBI:37565"/>
        <label>2</label>
    </ligand>
</feature>
<feature type="binding site" evidence="1">
    <location>
        <begin position="229"/>
        <end position="233"/>
    </location>
    <ligand>
        <name>GTP</name>
        <dbReference type="ChEBI" id="CHEBI:37565"/>
        <label>2</label>
    </ligand>
</feature>
<feature type="binding site" evidence="1">
    <location>
        <begin position="294"/>
        <end position="297"/>
    </location>
    <ligand>
        <name>GTP</name>
        <dbReference type="ChEBI" id="CHEBI:37565"/>
        <label>2</label>
    </ligand>
</feature>
<accession>Q48V63</accession>
<name>DER_STRPM</name>